<comment type="function">
    <text evidence="2">Putative function in synaptic vesicle exocytosis by binding to Munc18-1, an essential component of the synaptic vesicle exocytotic machinery. May modulate processing of the amyloid-beta precursor protein (APP) and hence formation of APP-beta. Component of the LIN-10-LIN-2-LIN-7 complex, which associates with the motor protein KIF17 to transport vesicles containing N-methyl-D-aspartate (NMDA) receptor subunit NR2B along microtubules (By similarity).</text>
</comment>
<comment type="subunit">
    <text evidence="2 7 8">Part of a multimeric complex containing STXBP1 and STX1A. Interacts with STXBP1 (By similarity). Also part of the brain-specific heterotrimeric complex LIN-10/X11-alpha, LIN-2/CASK, and LIN7. Component of the brain-specific heterotrimeric complex (LIN-10-LIN-2-LIN-7 complex) composed of at least APBA1, CASK, and LIN7, which associates with the motor protein KIF17 to transport vesicles along microtubules (By similarity). Within the complex, interacts (via PDZ domain) with the motor protein KIF17; the interaction is direct and is required for association of KIF17 with the cargo that is to be transported (By similarity). Both isoform 1 and isoform 2 bind to the cytoplasmic domain of amyloid protein (APP). Interacts (via PDZ 1 and 2 domains) with FSPB. Isoform 2, but not isoform 1, interacts (via its truncated PID domain) with active, GTP-bound RAB6A and RAB6B.</text>
</comment>
<comment type="interaction">
    <interactant intactId="EBI-368690">
        <id>Q02410</id>
    </interactant>
    <interactant intactId="EBI-77613">
        <id>P05067</id>
        <label>APP</label>
    </interactant>
    <organismsDiffer>false</organismsDiffer>
    <experiments>5</experiments>
</comment>
<comment type="interaction">
    <interactant intactId="EBI-368690">
        <id>Q02410</id>
    </interactant>
    <interactant intactId="EBI-1215506">
        <id>O14936</id>
        <label>CASK</label>
    </interactant>
    <organismsDiffer>false</organismsDiffer>
    <experiments>4</experiments>
</comment>
<comment type="interaction">
    <interactant intactId="EBI-368690">
        <id>Q02410</id>
    </interactant>
    <interactant intactId="EBI-297277">
        <id>P49768</id>
        <label>PSEN1</label>
    </interactant>
    <organismsDiffer>false</organismsDiffer>
    <experiments>4</experiments>
</comment>
<comment type="interaction">
    <interactant intactId="EBI-9247455">
        <id>Q02410-2</id>
    </interactant>
    <interactant intactId="EBI-8851226">
        <id>P20340-1</id>
        <label>RAB6A</label>
    </interactant>
    <organismsDiffer>false</organismsDiffer>
    <experiments>4</experiments>
</comment>
<comment type="interaction">
    <interactant intactId="EBI-9247455">
        <id>Q02410-2</id>
    </interactant>
    <interactant intactId="EBI-1760079">
        <id>Q9NRW1</id>
        <label>RAB6B</label>
    </interactant>
    <organismsDiffer>false</organismsDiffer>
    <experiments>4</experiments>
</comment>
<comment type="subcellular location">
    <subcellularLocation>
        <location evidence="7">Cytoplasm</location>
    </subcellularLocation>
    <subcellularLocation>
        <location evidence="7">Cytoplasm</location>
        <location evidence="7">Perinuclear region</location>
    </subcellularLocation>
    <subcellularLocation>
        <location evidence="7">Nucleus</location>
    </subcellularLocation>
    <text>Only about 5% of the protein is located in the nucleus.</text>
</comment>
<comment type="subcellular location">
    <molecule>Isoform 2</molecule>
    <subcellularLocation>
        <location evidence="8">Golgi apparatus</location>
    </subcellularLocation>
</comment>
<comment type="alternative products">
    <event type="alternative splicing"/>
    <isoform>
        <id>Q02410-1</id>
        <name>1</name>
        <sequence type="displayed"/>
    </isoform>
    <isoform>
        <id>Q02410-2</id>
        <name>2</name>
        <name>Mint1_826</name>
        <sequence type="described" ref="VSP_053518"/>
    </isoform>
</comment>
<comment type="tissue specificity">
    <text evidence="8">Brain and spinal cord. Isoform 2 is expressed in testis and brain, but not detected in lung, liver or spleen.</text>
</comment>
<comment type="domain">
    <text>Composed of an N-terminal domain that binds Munc18-1 and LIN-2/CASK, a middle phosphotyrosine-binding domain (PID/PTB) that mediates binding with the cytoplasmic domain of the amyloid-beta precursor protein, and two C-terminal PDZ domains thought to attach proteins to the plasma membrane.</text>
</comment>
<comment type="domain">
    <text evidence="1">The autoinhibitory helix linker occludes the APP binding site.</text>
</comment>
<comment type="domain">
    <text evidence="8">The PID domain, truncated by 11 amino acids, as observed in isoform 2, but not full-length, mediates the interaction with RAB6A and RAB6B.</text>
</comment>
<comment type="miscellaneous">
    <molecule>Isoform 2</molecule>
    <text evidence="10">This isoform interacts with RAB6 GTPases.</text>
</comment>
<protein>
    <recommendedName>
        <fullName>Amyloid-beta A4 precursor protein-binding family A member 1</fullName>
    </recommendedName>
    <alternativeName>
        <fullName>Adapter protein X11alpha</fullName>
    </alternativeName>
    <alternativeName>
        <fullName>Neuron-specific X11 protein</fullName>
    </alternativeName>
    <alternativeName>
        <fullName>Neuronal Munc18-1-interacting protein 1</fullName>
        <shortName>Mint-1</shortName>
    </alternativeName>
</protein>
<keyword id="KW-0002">3D-structure</keyword>
<keyword id="KW-0025">Alternative splicing</keyword>
<keyword id="KW-0963">Cytoplasm</keyword>
<keyword id="KW-0333">Golgi apparatus</keyword>
<keyword id="KW-0539">Nucleus</keyword>
<keyword id="KW-0597">Phosphoprotein</keyword>
<keyword id="KW-0653">Protein transport</keyword>
<keyword id="KW-1267">Proteomics identification</keyword>
<keyword id="KW-1185">Reference proteome</keyword>
<keyword id="KW-0677">Repeat</keyword>
<keyword id="KW-0813">Transport</keyword>
<reference key="1">
    <citation type="journal article" date="1997" name="J. Biol. Chem.">
        <title>Mints, Munc18-interacting proteins in synaptic vesicle exocytosis.</title>
        <authorList>
            <person name="Okamoto M."/>
            <person name="Suedhof T.C."/>
        </authorList>
    </citation>
    <scope>NUCLEOTIDE SEQUENCE [MRNA] (ISOFORM 1)</scope>
    <source>
        <tissue>Brain</tissue>
    </source>
</reference>
<reference key="2">
    <citation type="journal article" date="1998" name="J. Biol. Chem.">
        <title>The X11alpha protein slows cellular amyloid precursor protein processing and reduces Abeta40 and Abeta42 secretion.</title>
        <authorList>
            <person name="Borg J.-P."/>
            <person name="Yang Y."/>
            <person name="De Taddeo-Borg M."/>
            <person name="Margolis B."/>
            <person name="Turner R.S."/>
        </authorList>
    </citation>
    <scope>NUCLEOTIDE SEQUENCE [MRNA] (ISOFORM 1)</scope>
    <source>
        <tissue>Brain</tissue>
    </source>
</reference>
<reference key="3">
    <citation type="journal article" date="2004" name="Nature">
        <title>DNA sequence and analysis of human chromosome 9.</title>
        <authorList>
            <person name="Humphray S.J."/>
            <person name="Oliver K."/>
            <person name="Hunt A.R."/>
            <person name="Plumb R.W."/>
            <person name="Loveland J.E."/>
            <person name="Howe K.L."/>
            <person name="Andrews T.D."/>
            <person name="Searle S."/>
            <person name="Hunt S.E."/>
            <person name="Scott C.E."/>
            <person name="Jones M.C."/>
            <person name="Ainscough R."/>
            <person name="Almeida J.P."/>
            <person name="Ambrose K.D."/>
            <person name="Ashwell R.I.S."/>
            <person name="Babbage A.K."/>
            <person name="Babbage S."/>
            <person name="Bagguley C.L."/>
            <person name="Bailey J."/>
            <person name="Banerjee R."/>
            <person name="Barker D.J."/>
            <person name="Barlow K.F."/>
            <person name="Bates K."/>
            <person name="Beasley H."/>
            <person name="Beasley O."/>
            <person name="Bird C.P."/>
            <person name="Bray-Allen S."/>
            <person name="Brown A.J."/>
            <person name="Brown J.Y."/>
            <person name="Burford D."/>
            <person name="Burrill W."/>
            <person name="Burton J."/>
            <person name="Carder C."/>
            <person name="Carter N.P."/>
            <person name="Chapman J.C."/>
            <person name="Chen Y."/>
            <person name="Clarke G."/>
            <person name="Clark S.Y."/>
            <person name="Clee C.M."/>
            <person name="Clegg S."/>
            <person name="Collier R.E."/>
            <person name="Corby N."/>
            <person name="Crosier M."/>
            <person name="Cummings A.T."/>
            <person name="Davies J."/>
            <person name="Dhami P."/>
            <person name="Dunn M."/>
            <person name="Dutta I."/>
            <person name="Dyer L.W."/>
            <person name="Earthrowl M.E."/>
            <person name="Faulkner L."/>
            <person name="Fleming C.J."/>
            <person name="Frankish A."/>
            <person name="Frankland J.A."/>
            <person name="French L."/>
            <person name="Fricker D.G."/>
            <person name="Garner P."/>
            <person name="Garnett J."/>
            <person name="Ghori J."/>
            <person name="Gilbert J.G.R."/>
            <person name="Glison C."/>
            <person name="Grafham D.V."/>
            <person name="Gribble S."/>
            <person name="Griffiths C."/>
            <person name="Griffiths-Jones S."/>
            <person name="Grocock R."/>
            <person name="Guy J."/>
            <person name="Hall R.E."/>
            <person name="Hammond S."/>
            <person name="Harley J.L."/>
            <person name="Harrison E.S.I."/>
            <person name="Hart E.A."/>
            <person name="Heath P.D."/>
            <person name="Henderson C.D."/>
            <person name="Hopkins B.L."/>
            <person name="Howard P.J."/>
            <person name="Howden P.J."/>
            <person name="Huckle E."/>
            <person name="Johnson C."/>
            <person name="Johnson D."/>
            <person name="Joy A.A."/>
            <person name="Kay M."/>
            <person name="Keenan S."/>
            <person name="Kershaw J.K."/>
            <person name="Kimberley A.M."/>
            <person name="King A."/>
            <person name="Knights A."/>
            <person name="Laird G.K."/>
            <person name="Langford C."/>
            <person name="Lawlor S."/>
            <person name="Leongamornlert D.A."/>
            <person name="Leversha M."/>
            <person name="Lloyd C."/>
            <person name="Lloyd D.M."/>
            <person name="Lovell J."/>
            <person name="Martin S."/>
            <person name="Mashreghi-Mohammadi M."/>
            <person name="Matthews L."/>
            <person name="McLaren S."/>
            <person name="McLay K.E."/>
            <person name="McMurray A."/>
            <person name="Milne S."/>
            <person name="Nickerson T."/>
            <person name="Nisbett J."/>
            <person name="Nordsiek G."/>
            <person name="Pearce A.V."/>
            <person name="Peck A.I."/>
            <person name="Porter K.M."/>
            <person name="Pandian R."/>
            <person name="Pelan S."/>
            <person name="Phillimore B."/>
            <person name="Povey S."/>
            <person name="Ramsey Y."/>
            <person name="Rand V."/>
            <person name="Scharfe M."/>
            <person name="Sehra H.K."/>
            <person name="Shownkeen R."/>
            <person name="Sims S.K."/>
            <person name="Skuce C.D."/>
            <person name="Smith M."/>
            <person name="Steward C.A."/>
            <person name="Swarbreck D."/>
            <person name="Sycamore N."/>
            <person name="Tester J."/>
            <person name="Thorpe A."/>
            <person name="Tracey A."/>
            <person name="Tromans A."/>
            <person name="Thomas D.W."/>
            <person name="Wall M."/>
            <person name="Wallis J.M."/>
            <person name="West A.P."/>
            <person name="Whitehead S.L."/>
            <person name="Willey D.L."/>
            <person name="Williams S.A."/>
            <person name="Wilming L."/>
            <person name="Wray P.W."/>
            <person name="Young L."/>
            <person name="Ashurst J.L."/>
            <person name="Coulson A."/>
            <person name="Blocker H."/>
            <person name="Durbin R.M."/>
            <person name="Sulston J.E."/>
            <person name="Hubbard T."/>
            <person name="Jackson M.J."/>
            <person name="Bentley D.R."/>
            <person name="Beck S."/>
            <person name="Rogers J."/>
            <person name="Dunham I."/>
        </authorList>
    </citation>
    <scope>NUCLEOTIDE SEQUENCE [LARGE SCALE GENOMIC DNA]</scope>
</reference>
<reference key="4">
    <citation type="journal article" date="1993" name="Proc. Natl. Acad. Sci. U.S.A.">
        <title>Gene in the region of the Friedreich ataxia locus encodes a putative transmembrane protein expressed in the nervous system.</title>
        <authorList>
            <person name="Duclos F."/>
            <person name="Koenig M."/>
            <person name="Boschert U."/>
            <person name="Sirugo G."/>
            <person name="Hen R."/>
            <person name="Mandel J.-L."/>
        </authorList>
    </citation>
    <scope>NUCLEOTIDE SEQUENCE [MRNA] OF 130-837 (ISOFORM 1)</scope>
    <source>
        <tissue>Fetal brain</tissue>
    </source>
</reference>
<reference key="5">
    <citation type="journal article" date="1996" name="Mol. Cell. Biol.">
        <title>The phosphotyrosine interaction domains of X11 and FE65 bind to distinct sites on the YENPTY motif of amyloid precursor protein.</title>
        <authorList>
            <person name="Borg J.-P."/>
            <person name="Ooi J."/>
            <person name="Levy E."/>
            <person name="Margolis B."/>
        </authorList>
    </citation>
    <scope>MUTAGENESIS OF PHE-608</scope>
</reference>
<reference key="6">
    <citation type="journal article" date="2009" name="Sci. Signal.">
        <title>Quantitative phosphoproteomic analysis of T cell receptor signaling reveals system-wide modulation of protein-protein interactions.</title>
        <authorList>
            <person name="Mayya V."/>
            <person name="Lundgren D.H."/>
            <person name="Hwang S.-I."/>
            <person name="Rezaul K."/>
            <person name="Wu L."/>
            <person name="Eng J.K."/>
            <person name="Rodionov V."/>
            <person name="Han D.K."/>
        </authorList>
    </citation>
    <scope>PHOSPHORYLATION [LARGE SCALE ANALYSIS] AT SER-263</scope>
    <scope>IDENTIFICATION BY MASS SPECTROMETRY [LARGE SCALE ANALYSIS]</scope>
    <source>
        <tissue>Leukemic T-cell</tissue>
    </source>
</reference>
<reference key="7">
    <citation type="journal article" date="2010" name="NeuroReport">
        <title>An X11alpha/FSBP complex represses transcription of the GSK3beta gene promoter.</title>
        <authorList>
            <person name="Lau K.F."/>
            <person name="Perkinton M.S."/>
            <person name="Rodriguez L."/>
            <person name="McLoughlin D.M."/>
            <person name="Miller C.C."/>
        </authorList>
    </citation>
    <scope>SUBCELLULAR LOCATION</scope>
    <scope>INTERACTION WITH FSBP</scope>
</reference>
<reference key="8">
    <citation type="journal article" date="2013" name="PLoS ONE">
        <title>A new Mint1 isoform, but not the conventional Mint1, interacts with the small GTPase Rab6.</title>
        <authorList>
            <person name="Thyrock A."/>
            <person name="Ossendorf E."/>
            <person name="Stehling M."/>
            <person name="Kail M."/>
            <person name="Kurtz T."/>
            <person name="Pohlentz G."/>
            <person name="Waschbusch D."/>
            <person name="Eggert S."/>
            <person name="Formstecher E."/>
            <person name="Muthing J."/>
            <person name="Dreisewerd K."/>
            <person name="Kins S."/>
            <person name="Goud B."/>
            <person name="Barnekow A."/>
        </authorList>
    </citation>
    <scope>ALTERNATIVE SPLICING (ISOFORM 2)</scope>
    <scope>INTERACTION WITH APP; RAB6A AND RAB6B</scope>
    <scope>SUBCELLULAR LOCATION (ISOFORMS 1 AND 2)</scope>
    <scope>TISSUE SPECIFICITY</scope>
</reference>
<reference key="9">
    <citation type="journal article" date="2014" name="J. Proteomics">
        <title>An enzyme assisted RP-RPLC approach for in-depth analysis of human liver phosphoproteome.</title>
        <authorList>
            <person name="Bian Y."/>
            <person name="Song C."/>
            <person name="Cheng K."/>
            <person name="Dong M."/>
            <person name="Wang F."/>
            <person name="Huang J."/>
            <person name="Sun D."/>
            <person name="Wang L."/>
            <person name="Ye M."/>
            <person name="Zou H."/>
        </authorList>
    </citation>
    <scope>PHOSPHORYLATION [LARGE SCALE ANALYSIS] AT SER-248; SER-263; THR-305 AND THR-370</scope>
    <scope>IDENTIFICATION BY MASS SPECTROMETRY [LARGE SCALE ANALYSIS]</scope>
    <source>
        <tissue>Liver</tissue>
    </source>
</reference>
<reference key="10">
    <citation type="journal article" date="1997" name="EMBO J.">
        <title>Sequence-specific recognition of the internalization motif of the Alzheimer's amyloid precursor protein by the X11 PTB domain.</title>
        <authorList>
            <person name="Zhang Z."/>
            <person name="Lee C.-H."/>
            <person name="Mandiyan V."/>
            <person name="Borg J.-P."/>
            <person name="Margolis B."/>
            <person name="Schlessinger J."/>
            <person name="Kuriyan J."/>
        </authorList>
    </citation>
    <scope>X-RAY CRYSTALLOGRAPHY (2.3 ANGSTROMS) OF 452-617</scope>
</reference>
<reference key="11">
    <citation type="submission" date="2005-11" db="PDB data bank">
        <title>Solution structure of the first PDZ domain of amyloid beta A4 precursor protein-binding family A, member 1.</title>
        <authorList>
            <consortium name="RIKEN structural genomics initiative (RSGI)"/>
        </authorList>
    </citation>
    <scope>STRUCTURE BY NMR OF 656-740</scope>
</reference>
<proteinExistence type="evidence at protein level"/>
<gene>
    <name type="primary">APBA1</name>
    <name type="synonym">MINT1</name>
    <name type="synonym">X11</name>
</gene>
<feature type="chain" id="PRO_0000064614" description="Amyloid-beta A4 precursor protein-binding family A member 1">
    <location>
        <begin position="1"/>
        <end position="837"/>
    </location>
</feature>
<feature type="domain" description="PID" evidence="5">
    <location>
        <begin position="457"/>
        <end position="643"/>
    </location>
</feature>
<feature type="domain" description="PDZ 1" evidence="4">
    <location>
        <begin position="656"/>
        <end position="742"/>
    </location>
</feature>
<feature type="domain" description="PDZ 2" evidence="4">
    <location>
        <begin position="747"/>
        <end position="822"/>
    </location>
</feature>
<feature type="region of interest" description="Disordered" evidence="6">
    <location>
        <begin position="1"/>
        <end position="93"/>
    </location>
</feature>
<feature type="region of interest" description="Munc-18-1 binding">
    <location>
        <begin position="226"/>
        <end position="314"/>
    </location>
</feature>
<feature type="region of interest" description="Disordered" evidence="6">
    <location>
        <begin position="238"/>
        <end position="342"/>
    </location>
</feature>
<feature type="region of interest" description="Disordered" evidence="6">
    <location>
        <begin position="358"/>
        <end position="435"/>
    </location>
</feature>
<feature type="region of interest" description="LIN-2/CASK binding">
    <location>
        <begin position="373"/>
        <end position="436"/>
    </location>
</feature>
<feature type="region of interest" description="Autoinhibitory helix linker" evidence="1">
    <location>
        <begin position="626"/>
        <end position="641"/>
    </location>
</feature>
<feature type="compositionally biased region" description="Acidic residues" evidence="6">
    <location>
        <begin position="23"/>
        <end position="38"/>
    </location>
</feature>
<feature type="compositionally biased region" description="Basic and acidic residues" evidence="6">
    <location>
        <begin position="238"/>
        <end position="254"/>
    </location>
</feature>
<feature type="compositionally biased region" description="Basic and acidic residues" evidence="6">
    <location>
        <begin position="387"/>
        <end position="398"/>
    </location>
</feature>
<feature type="compositionally biased region" description="Low complexity" evidence="6">
    <location>
        <begin position="399"/>
        <end position="418"/>
    </location>
</feature>
<feature type="modified residue" description="Phosphoserine" evidence="2">
    <location>
        <position position="78"/>
    </location>
</feature>
<feature type="modified residue" description="Phosphoserine" evidence="2">
    <location>
        <position position="242"/>
    </location>
</feature>
<feature type="modified residue" description="Phosphoserine" evidence="2">
    <location>
        <position position="246"/>
    </location>
</feature>
<feature type="modified residue" description="Phosphoserine" evidence="12">
    <location>
        <position position="248"/>
    </location>
</feature>
<feature type="modified residue" description="Phosphoserine" evidence="11 12">
    <location>
        <position position="263"/>
    </location>
</feature>
<feature type="modified residue" description="Phosphoserine" evidence="2">
    <location>
        <position position="280"/>
    </location>
</feature>
<feature type="modified residue" description="Phosphoserine" evidence="3">
    <location>
        <position position="285"/>
    </location>
</feature>
<feature type="modified residue" description="Phosphothreonine" evidence="12">
    <location>
        <position position="305"/>
    </location>
</feature>
<feature type="modified residue" description="Phosphoserine" evidence="2">
    <location>
        <position position="313"/>
    </location>
</feature>
<feature type="modified residue" description="Phosphoserine" evidence="2">
    <location>
        <position position="367"/>
    </location>
</feature>
<feature type="modified residue" description="Phosphothreonine" evidence="12">
    <location>
        <position position="370"/>
    </location>
</feature>
<feature type="modified residue" description="Phosphoserine" evidence="2">
    <location>
        <position position="401"/>
    </location>
</feature>
<feature type="modified residue" description="Phosphoserine" evidence="2">
    <location>
        <position position="403"/>
    </location>
</feature>
<feature type="modified residue" description="Phosphoserine" evidence="2">
    <location>
        <position position="408"/>
    </location>
</feature>
<feature type="modified residue" description="Phosphoserine" evidence="3">
    <location>
        <position position="568"/>
    </location>
</feature>
<feature type="splice variant" id="VSP_053518" description="In isoform 2." evidence="10">
    <location>
        <begin position="495"/>
        <end position="505"/>
    </location>
</feature>
<feature type="sequence variant" id="VAR_050664" description="In dbSNP:rs34788368.">
    <original>S</original>
    <variation>A</variation>
    <location>
        <position position="184"/>
    </location>
</feature>
<feature type="mutagenesis site" description="Diminishes interaction with APP." evidence="9">
    <original>F</original>
    <variation>V</variation>
    <location>
        <position position="608"/>
    </location>
</feature>
<feature type="sequence conflict" description="In Ref. 4; AAA61307." evidence="10" ref="4">
    <original>A</original>
    <variation>V</variation>
    <location>
        <position position="164"/>
    </location>
</feature>
<feature type="sequence conflict" description="In Ref. 1; AAC05304." evidence="10" ref="1">
    <original>D</original>
    <variation>H</variation>
    <location>
        <position position="208"/>
    </location>
</feature>
<feature type="sequence conflict" description="In Ref. 1; AAC05304 and 4; AAA61307." evidence="10" ref="1 4">
    <original>AST</original>
    <variation>VPI</variation>
    <location>
        <begin position="427"/>
        <end position="429"/>
    </location>
</feature>
<feature type="sequence conflict" description="In Ref. 1; AAC05304 and 4; AAA61307." evidence="10" ref="1 4">
    <original>S</original>
    <variation>L</variation>
    <location>
        <position position="522"/>
    </location>
</feature>
<feature type="sequence conflict" description="In Ref. 1; AAC05304 and 4; AAA61307." evidence="10" ref="1 4">
    <original>M</original>
    <variation>I</variation>
    <location>
        <position position="563"/>
    </location>
</feature>
<feature type="sequence conflict" description="In Ref. 1; AAC05304 and 4; AAA61307." evidence="10" ref="1 4">
    <original>K</original>
    <variation>E</variation>
    <location>
        <position position="730"/>
    </location>
</feature>
<feature type="turn" evidence="13">
    <location>
        <begin position="455"/>
        <end position="457"/>
    </location>
</feature>
<feature type="strand" evidence="13">
    <location>
        <begin position="459"/>
        <end position="472"/>
    </location>
</feature>
<feature type="helix" evidence="13">
    <location>
        <begin position="479"/>
        <end position="498"/>
    </location>
</feature>
<feature type="strand" evidence="13">
    <location>
        <begin position="516"/>
        <end position="521"/>
    </location>
</feature>
<feature type="strand" evidence="13">
    <location>
        <begin position="523"/>
        <end position="530"/>
    </location>
</feature>
<feature type="turn" evidence="13">
    <location>
        <begin position="531"/>
        <end position="533"/>
    </location>
</feature>
<feature type="strand" evidence="13">
    <location>
        <begin position="536"/>
        <end position="541"/>
    </location>
</feature>
<feature type="helix" evidence="13">
    <location>
        <begin position="542"/>
        <end position="544"/>
    </location>
</feature>
<feature type="strand" evidence="13">
    <location>
        <begin position="545"/>
        <end position="551"/>
    </location>
</feature>
<feature type="strand" evidence="13">
    <location>
        <begin position="554"/>
        <end position="559"/>
    </location>
</feature>
<feature type="strand" evidence="13">
    <location>
        <begin position="586"/>
        <end position="593"/>
    </location>
</feature>
<feature type="helix" evidence="13">
    <location>
        <begin position="597"/>
        <end position="616"/>
    </location>
</feature>
<feature type="strand" evidence="14">
    <location>
        <begin position="655"/>
        <end position="660"/>
    </location>
</feature>
<feature type="strand" evidence="14">
    <location>
        <begin position="669"/>
        <end position="672"/>
    </location>
</feature>
<feature type="strand" evidence="14">
    <location>
        <begin position="676"/>
        <end position="679"/>
    </location>
</feature>
<feature type="strand" evidence="14">
    <location>
        <begin position="684"/>
        <end position="688"/>
    </location>
</feature>
<feature type="strand" evidence="16">
    <location>
        <begin position="690"/>
        <end position="692"/>
    </location>
</feature>
<feature type="helix" evidence="14">
    <location>
        <begin position="693"/>
        <end position="697"/>
    </location>
</feature>
<feature type="strand" evidence="14">
    <location>
        <begin position="705"/>
        <end position="709"/>
    </location>
</feature>
<feature type="helix" evidence="14">
    <location>
        <begin position="719"/>
        <end position="727"/>
    </location>
</feature>
<feature type="strand" evidence="14">
    <location>
        <begin position="730"/>
        <end position="740"/>
    </location>
</feature>
<feature type="strand" evidence="15">
    <location>
        <begin position="746"/>
        <end position="756"/>
    </location>
</feature>
<feature type="strand" evidence="15">
    <location>
        <begin position="760"/>
        <end position="764"/>
    </location>
</feature>
<feature type="strand" evidence="15">
    <location>
        <begin position="767"/>
        <end position="771"/>
    </location>
</feature>
<feature type="helix" evidence="15">
    <location>
        <begin position="777"/>
        <end position="780"/>
    </location>
</feature>
<feature type="strand" evidence="15">
    <location>
        <begin position="786"/>
        <end position="788"/>
    </location>
</feature>
<feature type="helix" evidence="15">
    <location>
        <begin position="796"/>
        <end position="798"/>
    </location>
</feature>
<feature type="helix" evidence="15">
    <location>
        <begin position="801"/>
        <end position="809"/>
    </location>
</feature>
<feature type="strand" evidence="15">
    <location>
        <begin position="813"/>
        <end position="821"/>
    </location>
</feature>
<name>APBA1_HUMAN</name>
<sequence length="837" mass="92865">MNHLEGSAEVEVTDEAAGGEVNESVEADLEHPEVEEEQQQPPQQQHYVGRHQRGRALEDLRAQLGQEEEERGECLARSASTESGFHNHTDTAEGDVIAAARDGYDAERAQDPEDESAYAVQYRPEAEEYTEQAEAEHAEATHRRALPNHLHFHSLEHEEAMNAAYSGYVYTHRLFHRGEDEPYSEPYADYGGLQEHVYEEIGDAPELDARDGLRLYEQERDEAAAYRQEALGARLHHYDERSDGESDSPEKEAEFAPYPRMDSYEQEEDIDQIVAEVKQSMSSQSLDKAAEDMPEAEQDLERPPTPAGGRPDSPGLQAPAGQQRAVGPAGGGEAGQRYSKEKRDAISLAIKDIKEAIEEVKTRTIRSPYTPDEPKEPIWVMRQDISPTRDCDDQRPMDGDSPSPGSSSPLGAESSSTSLHPSDPVEASTNKESRKSLASFPTYVEVPGPCDPEDLIDGIIFAANYLGSTQLLSDKTPSKNVRMMQAQEAVSRIKMAQKLAKSRKKAPEGESQPMTEVDLFISTQRIKVLNADTQETMMDHPLRTISYIADIGNIVVLMARRRMPRSNSQENVEASHPSQDGKRQYKMICHVFESEDAQLIAQSIGQAFSVAYQEFLRANGINPEDLSQKEYSDLLNTQDMYNDDLIHFSKSENCKDVFIEKQKGEILGVVIVESGWGSILPTVIIANMMHGGPAEKSGKLNIGDQIMSINGTSLVGLPLSTCQSIIKGLKNQSRVKLNIVRCPPVTTVLIRRPDLRYQLGFSVQNGIICSLMRGGIAERGGVRVGHRIIEINGQSVVATPHEKIVHILSNAVGEIHMKTMPAAMYRLLTAQEQPVYI</sequence>
<accession>Q02410</accession>
<accession>O14914</accession>
<accession>O60570</accession>
<accession>Q5VYR8</accession>
<evidence type="ECO:0000250" key="1"/>
<evidence type="ECO:0000250" key="2">
    <source>
        <dbReference type="UniProtKB" id="B2RUJ5"/>
    </source>
</evidence>
<evidence type="ECO:0000250" key="3">
    <source>
        <dbReference type="UniProtKB" id="O35430"/>
    </source>
</evidence>
<evidence type="ECO:0000255" key="4">
    <source>
        <dbReference type="PROSITE-ProRule" id="PRU00143"/>
    </source>
</evidence>
<evidence type="ECO:0000255" key="5">
    <source>
        <dbReference type="PROSITE-ProRule" id="PRU00148"/>
    </source>
</evidence>
<evidence type="ECO:0000256" key="6">
    <source>
        <dbReference type="SAM" id="MobiDB-lite"/>
    </source>
</evidence>
<evidence type="ECO:0000269" key="7">
    <source>
    </source>
</evidence>
<evidence type="ECO:0000269" key="8">
    <source>
    </source>
</evidence>
<evidence type="ECO:0000269" key="9">
    <source>
    </source>
</evidence>
<evidence type="ECO:0000305" key="10"/>
<evidence type="ECO:0007744" key="11">
    <source>
    </source>
</evidence>
<evidence type="ECO:0007744" key="12">
    <source>
    </source>
</evidence>
<evidence type="ECO:0007829" key="13">
    <source>
        <dbReference type="PDB" id="1AQC"/>
    </source>
</evidence>
<evidence type="ECO:0007829" key="14">
    <source>
        <dbReference type="PDB" id="1U37"/>
    </source>
</evidence>
<evidence type="ECO:0007829" key="15">
    <source>
        <dbReference type="PDB" id="1U39"/>
    </source>
</evidence>
<evidence type="ECO:0007829" key="16">
    <source>
        <dbReference type="PDB" id="1U3B"/>
    </source>
</evidence>
<dbReference type="EMBL" id="AF029106">
    <property type="protein sequence ID" value="AAC05304.1"/>
    <property type="molecule type" value="mRNA"/>
</dbReference>
<dbReference type="EMBL" id="AF047347">
    <property type="protein sequence ID" value="AAC39766.1"/>
    <property type="molecule type" value="mRNA"/>
</dbReference>
<dbReference type="EMBL" id="AL353693">
    <property type="status" value="NOT_ANNOTATED_CDS"/>
    <property type="molecule type" value="Genomic_DNA"/>
</dbReference>
<dbReference type="EMBL" id="AL355140">
    <property type="status" value="NOT_ANNOTATED_CDS"/>
    <property type="molecule type" value="Genomic_DNA"/>
</dbReference>
<dbReference type="EMBL" id="L04953">
    <property type="protein sequence ID" value="AAA61307.1"/>
    <property type="molecule type" value="mRNA"/>
</dbReference>
<dbReference type="CCDS" id="CCDS6630.1">
    <molecule id="Q02410-1"/>
</dbReference>
<dbReference type="PIR" id="A47176">
    <property type="entry name" value="A47176"/>
</dbReference>
<dbReference type="RefSeq" id="NP_001154.2">
    <molecule id="Q02410-1"/>
    <property type="nucleotide sequence ID" value="NM_001163.3"/>
</dbReference>
<dbReference type="RefSeq" id="XP_005252025.1">
    <molecule id="Q02410-2"/>
    <property type="nucleotide sequence ID" value="XM_005251968.4"/>
</dbReference>
<dbReference type="RefSeq" id="XP_011516919.1">
    <molecule id="Q02410-1"/>
    <property type="nucleotide sequence ID" value="XM_011518617.3"/>
</dbReference>
<dbReference type="RefSeq" id="XP_016870159.1">
    <molecule id="Q02410-1"/>
    <property type="nucleotide sequence ID" value="XM_017014670.2"/>
</dbReference>
<dbReference type="RefSeq" id="XP_047279256.1">
    <molecule id="Q02410-1"/>
    <property type="nucleotide sequence ID" value="XM_047423300.1"/>
</dbReference>
<dbReference type="RefSeq" id="XP_054218833.1">
    <molecule id="Q02410-1"/>
    <property type="nucleotide sequence ID" value="XM_054362858.1"/>
</dbReference>
<dbReference type="RefSeq" id="XP_054218834.1">
    <molecule id="Q02410-1"/>
    <property type="nucleotide sequence ID" value="XM_054362859.1"/>
</dbReference>
<dbReference type="RefSeq" id="XP_054218835.1">
    <molecule id="Q02410-1"/>
    <property type="nucleotide sequence ID" value="XM_054362860.1"/>
</dbReference>
<dbReference type="RefSeq" id="XP_054218836.1">
    <molecule id="Q02410-2"/>
    <property type="nucleotide sequence ID" value="XM_054362861.1"/>
</dbReference>
<dbReference type="PDB" id="1AQC">
    <property type="method" value="X-ray"/>
    <property type="resolution" value="2.30 A"/>
    <property type="chains" value="A/B=453-623"/>
</dbReference>
<dbReference type="PDB" id="1U37">
    <property type="method" value="NMR"/>
    <property type="chains" value="A=655-741"/>
</dbReference>
<dbReference type="PDB" id="1U38">
    <property type="method" value="NMR"/>
    <property type="chains" value="A=655-741"/>
</dbReference>
<dbReference type="PDB" id="1U39">
    <property type="method" value="NMR"/>
    <property type="chains" value="A=743-822"/>
</dbReference>
<dbReference type="PDB" id="1U3B">
    <property type="method" value="NMR"/>
    <property type="chains" value="A=655-837"/>
</dbReference>
<dbReference type="PDB" id="1X11">
    <property type="method" value="X-ray"/>
    <property type="resolution" value="2.50 A"/>
    <property type="chains" value="A/B=453-623"/>
</dbReference>
<dbReference type="PDB" id="1X45">
    <property type="method" value="NMR"/>
    <property type="chains" value="A=656-740"/>
</dbReference>
<dbReference type="PDB" id="1Y7N">
    <property type="method" value="NMR"/>
    <property type="chains" value="A=745-823"/>
</dbReference>
<dbReference type="PDBsum" id="1AQC"/>
<dbReference type="PDBsum" id="1U37"/>
<dbReference type="PDBsum" id="1U38"/>
<dbReference type="PDBsum" id="1U39"/>
<dbReference type="PDBsum" id="1U3B"/>
<dbReference type="PDBsum" id="1X11"/>
<dbReference type="PDBsum" id="1X45"/>
<dbReference type="PDBsum" id="1Y7N"/>
<dbReference type="BMRB" id="Q02410"/>
<dbReference type="SMR" id="Q02410"/>
<dbReference type="BioGRID" id="106817">
    <property type="interactions" value="95"/>
</dbReference>
<dbReference type="ComplexPortal" id="CPX-7743">
    <property type="entry name" value="LIN-10-LIN-2-LIN-7 complex, LIN7B variant"/>
</dbReference>
<dbReference type="ComplexPortal" id="CPX-7744">
    <property type="entry name" value="LIN-10-LIN-2-LIN-7 complex, LIN7A variant"/>
</dbReference>
<dbReference type="ComplexPortal" id="CPX-7745">
    <property type="entry name" value="LIN-10-LIN-2-LIN-7 complex, LIN7C variant"/>
</dbReference>
<dbReference type="CORUM" id="Q02410"/>
<dbReference type="ELM" id="Q02410"/>
<dbReference type="FunCoup" id="Q02410">
    <property type="interactions" value="825"/>
</dbReference>
<dbReference type="IntAct" id="Q02410">
    <property type="interactions" value="93"/>
</dbReference>
<dbReference type="MINT" id="Q02410"/>
<dbReference type="STRING" id="9606.ENSP00000265381"/>
<dbReference type="TCDB" id="8.A.24.2.2">
    <property type="family name" value="the ezrin/radixin/moesin-binding phosphoprotein 50 (ebp50) family"/>
</dbReference>
<dbReference type="GlyGen" id="Q02410">
    <property type="glycosylation" value="2 sites, 1 O-linked glycan (1 site)"/>
</dbReference>
<dbReference type="iPTMnet" id="Q02410"/>
<dbReference type="PhosphoSitePlus" id="Q02410"/>
<dbReference type="BioMuta" id="APBA1"/>
<dbReference type="DMDM" id="116241250"/>
<dbReference type="jPOST" id="Q02410"/>
<dbReference type="MassIVE" id="Q02410"/>
<dbReference type="PaxDb" id="9606-ENSP00000265381"/>
<dbReference type="PeptideAtlas" id="Q02410"/>
<dbReference type="ProteomicsDB" id="58088">
    <molecule id="Q02410-1"/>
</dbReference>
<dbReference type="Pumba" id="Q02410"/>
<dbReference type="Antibodypedia" id="12360">
    <property type="antibodies" value="214 antibodies from 37 providers"/>
</dbReference>
<dbReference type="DNASU" id="320"/>
<dbReference type="Ensembl" id="ENST00000265381.7">
    <molecule id="Q02410-1"/>
    <property type="protein sequence ID" value="ENSP00000265381.3"/>
    <property type="gene ID" value="ENSG00000107282.9"/>
</dbReference>
<dbReference type="GeneID" id="320"/>
<dbReference type="KEGG" id="hsa:320"/>
<dbReference type="MANE-Select" id="ENST00000265381.7">
    <property type="protein sequence ID" value="ENSP00000265381.3"/>
    <property type="RefSeq nucleotide sequence ID" value="NM_001163.4"/>
    <property type="RefSeq protein sequence ID" value="NP_001154.2"/>
</dbReference>
<dbReference type="UCSC" id="uc004ahh.3">
    <molecule id="Q02410-1"/>
    <property type="organism name" value="human"/>
</dbReference>
<dbReference type="AGR" id="HGNC:578"/>
<dbReference type="CTD" id="320"/>
<dbReference type="DisGeNET" id="320"/>
<dbReference type="GeneCards" id="APBA1"/>
<dbReference type="HGNC" id="HGNC:578">
    <property type="gene designation" value="APBA1"/>
</dbReference>
<dbReference type="HPA" id="ENSG00000107282">
    <property type="expression patterns" value="Tissue enhanced (brain)"/>
</dbReference>
<dbReference type="MIM" id="602414">
    <property type="type" value="gene"/>
</dbReference>
<dbReference type="neXtProt" id="NX_Q02410"/>
<dbReference type="OpenTargets" id="ENSG00000107282"/>
<dbReference type="PharmGKB" id="PA24869"/>
<dbReference type="VEuPathDB" id="HostDB:ENSG00000107282"/>
<dbReference type="eggNOG" id="KOG3605">
    <property type="taxonomic scope" value="Eukaryota"/>
</dbReference>
<dbReference type="GeneTree" id="ENSGT00940000156820"/>
<dbReference type="HOGENOM" id="CLU_013563_1_0_1"/>
<dbReference type="InParanoid" id="Q02410"/>
<dbReference type="OMA" id="SENCKDX"/>
<dbReference type="OrthoDB" id="5987010at2759"/>
<dbReference type="PAN-GO" id="Q02410">
    <property type="GO annotations" value="5 GO annotations based on evolutionary models"/>
</dbReference>
<dbReference type="PhylomeDB" id="Q02410"/>
<dbReference type="TreeFam" id="TF315245"/>
<dbReference type="PathwayCommons" id="Q02410"/>
<dbReference type="Reactome" id="R-HSA-212676">
    <property type="pathway name" value="Dopamine Neurotransmitter Release Cycle"/>
</dbReference>
<dbReference type="Reactome" id="R-HSA-6794361">
    <property type="pathway name" value="Neurexins and neuroligins"/>
</dbReference>
<dbReference type="Reactome" id="R-HSA-9609736">
    <property type="pathway name" value="Assembly and cell surface presentation of NMDA receptors"/>
</dbReference>
<dbReference type="SignaLink" id="Q02410"/>
<dbReference type="SIGNOR" id="Q02410"/>
<dbReference type="BioGRID-ORCS" id="320">
    <property type="hits" value="15 hits in 1154 CRISPR screens"/>
</dbReference>
<dbReference type="ChiTaRS" id="APBA1">
    <property type="organism name" value="human"/>
</dbReference>
<dbReference type="EvolutionaryTrace" id="Q02410"/>
<dbReference type="GeneWiki" id="APBA1"/>
<dbReference type="GenomeRNAi" id="320"/>
<dbReference type="Pharos" id="Q02410">
    <property type="development level" value="Tbio"/>
</dbReference>
<dbReference type="PRO" id="PR:Q02410"/>
<dbReference type="Proteomes" id="UP000005640">
    <property type="component" value="Chromosome 9"/>
</dbReference>
<dbReference type="RNAct" id="Q02410">
    <property type="molecule type" value="protein"/>
</dbReference>
<dbReference type="Bgee" id="ENSG00000107282">
    <property type="expression patterns" value="Expressed in superior frontal gyrus and 101 other cell types or tissues"/>
</dbReference>
<dbReference type="ExpressionAtlas" id="Q02410">
    <property type="expression patterns" value="baseline and differential"/>
</dbReference>
<dbReference type="GO" id="GO:0005737">
    <property type="term" value="C:cytoplasm"/>
    <property type="evidence" value="ECO:0000318"/>
    <property type="project" value="GO_Central"/>
</dbReference>
<dbReference type="GO" id="GO:0005829">
    <property type="term" value="C:cytosol"/>
    <property type="evidence" value="ECO:0000304"/>
    <property type="project" value="Reactome"/>
</dbReference>
<dbReference type="GO" id="GO:0043197">
    <property type="term" value="C:dendritic spine"/>
    <property type="evidence" value="ECO:0000318"/>
    <property type="project" value="GO_Central"/>
</dbReference>
<dbReference type="GO" id="GO:0098978">
    <property type="term" value="C:glutamatergic synapse"/>
    <property type="evidence" value="ECO:0007669"/>
    <property type="project" value="Ensembl"/>
</dbReference>
<dbReference type="GO" id="GO:0005794">
    <property type="term" value="C:Golgi apparatus"/>
    <property type="evidence" value="ECO:0000314"/>
    <property type="project" value="HPA"/>
</dbReference>
<dbReference type="GO" id="GO:0005634">
    <property type="term" value="C:nucleus"/>
    <property type="evidence" value="ECO:0007669"/>
    <property type="project" value="UniProtKB-SubCell"/>
</dbReference>
<dbReference type="GO" id="GO:0048471">
    <property type="term" value="C:perinuclear region of cytoplasm"/>
    <property type="evidence" value="ECO:0007669"/>
    <property type="project" value="UniProtKB-SubCell"/>
</dbReference>
<dbReference type="GO" id="GO:0005886">
    <property type="term" value="C:plasma membrane"/>
    <property type="evidence" value="ECO:0000318"/>
    <property type="project" value="GO_Central"/>
</dbReference>
<dbReference type="GO" id="GO:0048787">
    <property type="term" value="C:presynaptic active zone membrane"/>
    <property type="evidence" value="ECO:0007669"/>
    <property type="project" value="Ensembl"/>
</dbReference>
<dbReference type="GO" id="GO:0098685">
    <property type="term" value="C:Schaffer collateral - CA1 synapse"/>
    <property type="evidence" value="ECO:0007669"/>
    <property type="project" value="Ensembl"/>
</dbReference>
<dbReference type="GO" id="GO:0008021">
    <property type="term" value="C:synaptic vesicle"/>
    <property type="evidence" value="ECO:0000304"/>
    <property type="project" value="ProtInc"/>
</dbReference>
<dbReference type="GO" id="GO:0001540">
    <property type="term" value="F:amyloid-beta binding"/>
    <property type="evidence" value="ECO:0000318"/>
    <property type="project" value="GO_Central"/>
</dbReference>
<dbReference type="GO" id="GO:0008088">
    <property type="term" value="P:axo-dendritic transport"/>
    <property type="evidence" value="ECO:0000304"/>
    <property type="project" value="ProtInc"/>
</dbReference>
<dbReference type="GO" id="GO:0007155">
    <property type="term" value="P:cell adhesion"/>
    <property type="evidence" value="ECO:0000304"/>
    <property type="project" value="ProtInc"/>
</dbReference>
<dbReference type="GO" id="GO:0007268">
    <property type="term" value="P:chemical synaptic transmission"/>
    <property type="evidence" value="ECO:0000318"/>
    <property type="project" value="GO_Central"/>
</dbReference>
<dbReference type="GO" id="GO:0014051">
    <property type="term" value="P:gamma-aminobutyric acid secretion"/>
    <property type="evidence" value="ECO:0007669"/>
    <property type="project" value="Ensembl"/>
</dbReference>
<dbReference type="GO" id="GO:0014047">
    <property type="term" value="P:glutamate secretion"/>
    <property type="evidence" value="ECO:0007669"/>
    <property type="project" value="Ensembl"/>
</dbReference>
<dbReference type="GO" id="GO:0001701">
    <property type="term" value="P:in utero embryonic development"/>
    <property type="evidence" value="ECO:0007669"/>
    <property type="project" value="Ensembl"/>
</dbReference>
<dbReference type="GO" id="GO:0006886">
    <property type="term" value="P:intracellular protein transport"/>
    <property type="evidence" value="ECO:0000304"/>
    <property type="project" value="ProtInc"/>
</dbReference>
<dbReference type="GO" id="GO:0007626">
    <property type="term" value="P:locomotory behavior"/>
    <property type="evidence" value="ECO:0007669"/>
    <property type="project" value="Ensembl"/>
</dbReference>
<dbReference type="GO" id="GO:0035264">
    <property type="term" value="P:multicellular organism growth"/>
    <property type="evidence" value="ECO:0007669"/>
    <property type="project" value="Ensembl"/>
</dbReference>
<dbReference type="GO" id="GO:0007399">
    <property type="term" value="P:nervous system development"/>
    <property type="evidence" value="ECO:0000304"/>
    <property type="project" value="ProtInc"/>
</dbReference>
<dbReference type="GO" id="GO:0099171">
    <property type="term" value="P:presynaptic modulation of chemical synaptic transmission"/>
    <property type="evidence" value="ECO:0007669"/>
    <property type="project" value="Ensembl"/>
</dbReference>
<dbReference type="GO" id="GO:0065003">
    <property type="term" value="P:protein-containing complex assembly"/>
    <property type="evidence" value="ECO:0000304"/>
    <property type="project" value="ProtInc"/>
</dbReference>
<dbReference type="GO" id="GO:0010468">
    <property type="term" value="P:regulation of gene expression"/>
    <property type="evidence" value="ECO:0007669"/>
    <property type="project" value="Ensembl"/>
</dbReference>
<dbReference type="CDD" id="cd22578">
    <property type="entry name" value="Mint1_CID"/>
    <property type="match status" value="1"/>
</dbReference>
<dbReference type="CDD" id="cd06720">
    <property type="entry name" value="PDZ1_APBA1_3-like"/>
    <property type="match status" value="1"/>
</dbReference>
<dbReference type="CDD" id="cd06793">
    <property type="entry name" value="PDZ2_APBA1_3-like"/>
    <property type="match status" value="1"/>
</dbReference>
<dbReference type="CDD" id="cd01208">
    <property type="entry name" value="PTB_X11"/>
    <property type="match status" value="1"/>
</dbReference>
<dbReference type="FunFam" id="2.30.29.30:FF:000044">
    <property type="entry name" value="amyloid beta A4 precursor protein-binding family A member 1"/>
    <property type="match status" value="1"/>
</dbReference>
<dbReference type="FunFam" id="2.30.42.10:FF:000007">
    <property type="entry name" value="Amyloid beta A4 protein-binding family A member"/>
    <property type="match status" value="1"/>
</dbReference>
<dbReference type="FunFam" id="2.30.42.10:FF:000017">
    <property type="entry name" value="Amyloid beta A4 protein-binding family A member 1"/>
    <property type="match status" value="1"/>
</dbReference>
<dbReference type="Gene3D" id="2.30.42.10">
    <property type="match status" value="2"/>
</dbReference>
<dbReference type="Gene3D" id="2.30.29.30">
    <property type="entry name" value="Pleckstrin-homology domain (PH domain)/Phosphotyrosine-binding domain (PTB)"/>
    <property type="match status" value="1"/>
</dbReference>
<dbReference type="IDEAL" id="IID00561"/>
<dbReference type="InterPro" id="IPR051230">
    <property type="entry name" value="APP-Binding"/>
</dbReference>
<dbReference type="InterPro" id="IPR001478">
    <property type="entry name" value="PDZ"/>
</dbReference>
<dbReference type="InterPro" id="IPR036034">
    <property type="entry name" value="PDZ_sf"/>
</dbReference>
<dbReference type="InterPro" id="IPR011993">
    <property type="entry name" value="PH-like_dom_sf"/>
</dbReference>
<dbReference type="InterPro" id="IPR006020">
    <property type="entry name" value="PTB/PI_dom"/>
</dbReference>
<dbReference type="PANTHER" id="PTHR12345:SF14">
    <property type="entry name" value="AMYLOID-BETA A4 PRECURSOR PROTEIN-BINDING FAMILY A MEMBER 1"/>
    <property type="match status" value="1"/>
</dbReference>
<dbReference type="PANTHER" id="PTHR12345">
    <property type="entry name" value="SYNTENIN RELATED"/>
    <property type="match status" value="1"/>
</dbReference>
<dbReference type="Pfam" id="PF00595">
    <property type="entry name" value="PDZ"/>
    <property type="match status" value="2"/>
</dbReference>
<dbReference type="Pfam" id="PF00640">
    <property type="entry name" value="PID"/>
    <property type="match status" value="1"/>
</dbReference>
<dbReference type="SMART" id="SM00228">
    <property type="entry name" value="PDZ"/>
    <property type="match status" value="2"/>
</dbReference>
<dbReference type="SMART" id="SM00462">
    <property type="entry name" value="PTB"/>
    <property type="match status" value="1"/>
</dbReference>
<dbReference type="SUPFAM" id="SSF50156">
    <property type="entry name" value="PDZ domain-like"/>
    <property type="match status" value="2"/>
</dbReference>
<dbReference type="SUPFAM" id="SSF50729">
    <property type="entry name" value="PH domain-like"/>
    <property type="match status" value="1"/>
</dbReference>
<dbReference type="PROSITE" id="PS50106">
    <property type="entry name" value="PDZ"/>
    <property type="match status" value="2"/>
</dbReference>
<dbReference type="PROSITE" id="PS01179">
    <property type="entry name" value="PID"/>
    <property type="match status" value="1"/>
</dbReference>
<organism>
    <name type="scientific">Homo sapiens</name>
    <name type="common">Human</name>
    <dbReference type="NCBI Taxonomy" id="9606"/>
    <lineage>
        <taxon>Eukaryota</taxon>
        <taxon>Metazoa</taxon>
        <taxon>Chordata</taxon>
        <taxon>Craniata</taxon>
        <taxon>Vertebrata</taxon>
        <taxon>Euteleostomi</taxon>
        <taxon>Mammalia</taxon>
        <taxon>Eutheria</taxon>
        <taxon>Euarchontoglires</taxon>
        <taxon>Primates</taxon>
        <taxon>Haplorrhini</taxon>
        <taxon>Catarrhini</taxon>
        <taxon>Hominidae</taxon>
        <taxon>Homo</taxon>
    </lineage>
</organism>